<evidence type="ECO:0000255" key="1">
    <source>
        <dbReference type="HAMAP-Rule" id="MF_01405"/>
    </source>
</evidence>
<reference key="1">
    <citation type="journal article" date="2004" name="Science">
        <title>A predator unmasked: life cycle of Bdellovibrio bacteriovorus from a genomic perspective.</title>
        <authorList>
            <person name="Rendulic S."/>
            <person name="Jagtap P."/>
            <person name="Rosinus A."/>
            <person name="Eppinger M."/>
            <person name="Baar C."/>
            <person name="Lanz C."/>
            <person name="Keller H."/>
            <person name="Lambert C."/>
            <person name="Evans K.J."/>
            <person name="Goesmann A."/>
            <person name="Meyer F."/>
            <person name="Sockett R.E."/>
            <person name="Schuster S.C."/>
        </authorList>
    </citation>
    <scope>NUCLEOTIDE SEQUENCE [LARGE SCALE GENOMIC DNA]</scope>
    <source>
        <strain>ATCC 15356 / DSM 50701 / NCIMB 9529 / HD100</strain>
    </source>
</reference>
<accession>Q6MJR8</accession>
<feature type="chain" id="PRO_0000178133" description="dITP/XTP pyrophosphatase">
    <location>
        <begin position="1"/>
        <end position="199"/>
    </location>
</feature>
<feature type="active site" description="Proton acceptor" evidence="1">
    <location>
        <position position="71"/>
    </location>
</feature>
<feature type="binding site" evidence="1">
    <location>
        <begin position="7"/>
        <end position="12"/>
    </location>
    <ligand>
        <name>substrate</name>
    </ligand>
</feature>
<feature type="binding site" evidence="1">
    <location>
        <position position="71"/>
    </location>
    <ligand>
        <name>Mg(2+)</name>
        <dbReference type="ChEBI" id="CHEBI:18420"/>
    </ligand>
</feature>
<feature type="binding site" evidence="1">
    <location>
        <position position="72"/>
    </location>
    <ligand>
        <name>substrate</name>
    </ligand>
</feature>
<feature type="binding site" evidence="1">
    <location>
        <begin position="154"/>
        <end position="157"/>
    </location>
    <ligand>
        <name>substrate</name>
    </ligand>
</feature>
<feature type="binding site" evidence="1">
    <location>
        <position position="177"/>
    </location>
    <ligand>
        <name>substrate</name>
    </ligand>
</feature>
<feature type="binding site" evidence="1">
    <location>
        <begin position="182"/>
        <end position="183"/>
    </location>
    <ligand>
        <name>substrate</name>
    </ligand>
</feature>
<gene>
    <name type="ordered locus">Bd2701</name>
</gene>
<organism>
    <name type="scientific">Bdellovibrio bacteriovorus (strain ATCC 15356 / DSM 50701 / NCIMB 9529 / HD100)</name>
    <dbReference type="NCBI Taxonomy" id="264462"/>
    <lineage>
        <taxon>Bacteria</taxon>
        <taxon>Pseudomonadati</taxon>
        <taxon>Bdellovibrionota</taxon>
        <taxon>Bdellovibrionia</taxon>
        <taxon>Bdellovibrionales</taxon>
        <taxon>Pseudobdellovibrionaceae</taxon>
        <taxon>Bdellovibrio</taxon>
    </lineage>
</organism>
<keyword id="KW-0378">Hydrolase</keyword>
<keyword id="KW-0460">Magnesium</keyword>
<keyword id="KW-0479">Metal-binding</keyword>
<keyword id="KW-0546">Nucleotide metabolism</keyword>
<keyword id="KW-0547">Nucleotide-binding</keyword>
<keyword id="KW-1185">Reference proteome</keyword>
<protein>
    <recommendedName>
        <fullName evidence="1">dITP/XTP pyrophosphatase</fullName>
        <ecNumber evidence="1">3.6.1.66</ecNumber>
    </recommendedName>
    <alternativeName>
        <fullName evidence="1">Non-canonical purine NTP pyrophosphatase</fullName>
    </alternativeName>
    <alternativeName>
        <fullName evidence="1">Non-standard purine NTP pyrophosphatase</fullName>
    </alternativeName>
    <alternativeName>
        <fullName evidence="1">Nucleoside-triphosphate diphosphatase</fullName>
    </alternativeName>
    <alternativeName>
        <fullName evidence="1">Nucleoside-triphosphate pyrophosphatase</fullName>
        <shortName evidence="1">NTPase</shortName>
    </alternativeName>
</protein>
<name>IXTPA_BDEBA</name>
<proteinExistence type="inferred from homology"/>
<sequence>MELWIATGNKGKLAEYKQLLRELPDLKVFSQGDIASFTPRPEDGKTFEDNARIKAKTLRAVKNNVWVLGEDAGLVVEGLNGLPGIHSARYAGPKASDSENVSKLLKMITLRPMPNKNAKFVCTTVVYTPTGEEWVFNGEMKGTIASKPAGLHGFGYDPVFIPEGQTQTLAELGTGYKSLLSHRAMALKAFLEKLQTVNP</sequence>
<comment type="function">
    <text evidence="1">Pyrophosphatase that catalyzes the hydrolysis of nucleoside triphosphates to their monophosphate derivatives, with a high preference for the non-canonical purine nucleotides XTP (xanthosine triphosphate), dITP (deoxyinosine triphosphate) and ITP. Seems to function as a house-cleaning enzyme that removes non-canonical purine nucleotides from the nucleotide pool, thus preventing their incorporation into DNA/RNA and avoiding chromosomal lesions.</text>
</comment>
<comment type="catalytic activity">
    <reaction evidence="1">
        <text>XTP + H2O = XMP + diphosphate + H(+)</text>
        <dbReference type="Rhea" id="RHEA:28610"/>
        <dbReference type="ChEBI" id="CHEBI:15377"/>
        <dbReference type="ChEBI" id="CHEBI:15378"/>
        <dbReference type="ChEBI" id="CHEBI:33019"/>
        <dbReference type="ChEBI" id="CHEBI:57464"/>
        <dbReference type="ChEBI" id="CHEBI:61314"/>
        <dbReference type="EC" id="3.6.1.66"/>
    </reaction>
</comment>
<comment type="catalytic activity">
    <reaction evidence="1">
        <text>dITP + H2O = dIMP + diphosphate + H(+)</text>
        <dbReference type="Rhea" id="RHEA:28342"/>
        <dbReference type="ChEBI" id="CHEBI:15377"/>
        <dbReference type="ChEBI" id="CHEBI:15378"/>
        <dbReference type="ChEBI" id="CHEBI:33019"/>
        <dbReference type="ChEBI" id="CHEBI:61194"/>
        <dbReference type="ChEBI" id="CHEBI:61382"/>
        <dbReference type="EC" id="3.6.1.66"/>
    </reaction>
</comment>
<comment type="catalytic activity">
    <reaction evidence="1">
        <text>ITP + H2O = IMP + diphosphate + H(+)</text>
        <dbReference type="Rhea" id="RHEA:29399"/>
        <dbReference type="ChEBI" id="CHEBI:15377"/>
        <dbReference type="ChEBI" id="CHEBI:15378"/>
        <dbReference type="ChEBI" id="CHEBI:33019"/>
        <dbReference type="ChEBI" id="CHEBI:58053"/>
        <dbReference type="ChEBI" id="CHEBI:61402"/>
        <dbReference type="EC" id="3.6.1.66"/>
    </reaction>
</comment>
<comment type="cofactor">
    <cofactor evidence="1">
        <name>Mg(2+)</name>
        <dbReference type="ChEBI" id="CHEBI:18420"/>
    </cofactor>
    <text evidence="1">Binds 1 Mg(2+) ion per subunit.</text>
</comment>
<comment type="subunit">
    <text evidence="1">Homodimer.</text>
</comment>
<comment type="similarity">
    <text evidence="1">Belongs to the HAM1 NTPase family.</text>
</comment>
<dbReference type="EC" id="3.6.1.66" evidence="1"/>
<dbReference type="EMBL" id="BX842653">
    <property type="protein sequence ID" value="CAE80492.1"/>
    <property type="molecule type" value="Genomic_DNA"/>
</dbReference>
<dbReference type="RefSeq" id="WP_011165095.1">
    <property type="nucleotide sequence ID" value="NC_005363.1"/>
</dbReference>
<dbReference type="SMR" id="Q6MJR8"/>
<dbReference type="STRING" id="264462.Bd2701"/>
<dbReference type="GeneID" id="93013591"/>
<dbReference type="KEGG" id="bba:Bd2701"/>
<dbReference type="eggNOG" id="COG0127">
    <property type="taxonomic scope" value="Bacteria"/>
</dbReference>
<dbReference type="HOGENOM" id="CLU_082080_0_1_7"/>
<dbReference type="Proteomes" id="UP000008080">
    <property type="component" value="Chromosome"/>
</dbReference>
<dbReference type="GO" id="GO:0005829">
    <property type="term" value="C:cytosol"/>
    <property type="evidence" value="ECO:0007669"/>
    <property type="project" value="TreeGrafter"/>
</dbReference>
<dbReference type="GO" id="GO:0035870">
    <property type="term" value="F:dITP diphosphatase activity"/>
    <property type="evidence" value="ECO:0007669"/>
    <property type="project" value="RHEA"/>
</dbReference>
<dbReference type="GO" id="GO:0036220">
    <property type="term" value="F:ITP diphosphatase activity"/>
    <property type="evidence" value="ECO:0007669"/>
    <property type="project" value="UniProtKB-EC"/>
</dbReference>
<dbReference type="GO" id="GO:0046872">
    <property type="term" value="F:metal ion binding"/>
    <property type="evidence" value="ECO:0007669"/>
    <property type="project" value="UniProtKB-KW"/>
</dbReference>
<dbReference type="GO" id="GO:0000166">
    <property type="term" value="F:nucleotide binding"/>
    <property type="evidence" value="ECO:0007669"/>
    <property type="project" value="UniProtKB-KW"/>
</dbReference>
<dbReference type="GO" id="GO:0017111">
    <property type="term" value="F:ribonucleoside triphosphate phosphatase activity"/>
    <property type="evidence" value="ECO:0007669"/>
    <property type="project" value="InterPro"/>
</dbReference>
<dbReference type="GO" id="GO:0036222">
    <property type="term" value="F:XTP diphosphatase activity"/>
    <property type="evidence" value="ECO:0007669"/>
    <property type="project" value="RHEA"/>
</dbReference>
<dbReference type="GO" id="GO:0009117">
    <property type="term" value="P:nucleotide metabolic process"/>
    <property type="evidence" value="ECO:0007669"/>
    <property type="project" value="UniProtKB-KW"/>
</dbReference>
<dbReference type="GO" id="GO:0009146">
    <property type="term" value="P:purine nucleoside triphosphate catabolic process"/>
    <property type="evidence" value="ECO:0007669"/>
    <property type="project" value="UniProtKB-UniRule"/>
</dbReference>
<dbReference type="CDD" id="cd00515">
    <property type="entry name" value="HAM1"/>
    <property type="match status" value="1"/>
</dbReference>
<dbReference type="FunFam" id="3.90.950.10:FF:000001">
    <property type="entry name" value="dITP/XTP pyrophosphatase"/>
    <property type="match status" value="1"/>
</dbReference>
<dbReference type="Gene3D" id="3.90.950.10">
    <property type="match status" value="1"/>
</dbReference>
<dbReference type="HAMAP" id="MF_01405">
    <property type="entry name" value="Non_canon_purine_NTPase"/>
    <property type="match status" value="1"/>
</dbReference>
<dbReference type="InterPro" id="IPR020922">
    <property type="entry name" value="dITP/XTP_pyrophosphatase"/>
</dbReference>
<dbReference type="InterPro" id="IPR029001">
    <property type="entry name" value="ITPase-like_fam"/>
</dbReference>
<dbReference type="InterPro" id="IPR002637">
    <property type="entry name" value="RdgB/HAM1"/>
</dbReference>
<dbReference type="NCBIfam" id="TIGR00042">
    <property type="entry name" value="RdgB/HAM1 family non-canonical purine NTP pyrophosphatase"/>
    <property type="match status" value="1"/>
</dbReference>
<dbReference type="PANTHER" id="PTHR11067:SF9">
    <property type="entry name" value="INOSINE TRIPHOSPHATE PYROPHOSPHATASE"/>
    <property type="match status" value="1"/>
</dbReference>
<dbReference type="PANTHER" id="PTHR11067">
    <property type="entry name" value="INOSINE TRIPHOSPHATE PYROPHOSPHATASE/HAM1 PROTEIN"/>
    <property type="match status" value="1"/>
</dbReference>
<dbReference type="Pfam" id="PF01725">
    <property type="entry name" value="Ham1p_like"/>
    <property type="match status" value="1"/>
</dbReference>
<dbReference type="SUPFAM" id="SSF52972">
    <property type="entry name" value="ITPase-like"/>
    <property type="match status" value="1"/>
</dbReference>